<keyword id="KW-0963">Cytoplasm</keyword>
<keyword id="KW-0342">GTP-binding</keyword>
<keyword id="KW-0460">Magnesium</keyword>
<keyword id="KW-0479">Metal-binding</keyword>
<keyword id="KW-0501">Molybdenum cofactor biosynthesis</keyword>
<keyword id="KW-0547">Nucleotide-binding</keyword>
<keyword id="KW-0808">Transferase</keyword>
<protein>
    <recommendedName>
        <fullName evidence="1">Probable molybdenum cofactor guanylyltransferase</fullName>
        <shortName evidence="1">MoCo guanylyltransferase</shortName>
        <ecNumber evidence="1">2.7.7.77</ecNumber>
    </recommendedName>
    <alternativeName>
        <fullName evidence="1">GTP:molybdopterin guanylyltransferase</fullName>
    </alternativeName>
    <alternativeName>
        <fullName evidence="1">Mo-MPT guanylyltransferase</fullName>
    </alternativeName>
    <alternativeName>
        <fullName evidence="1">Molybdopterin guanylyltransferase</fullName>
    </alternativeName>
    <alternativeName>
        <fullName evidence="1">Molybdopterin-guanine dinucleotide synthase</fullName>
        <shortName evidence="1">MGD synthase</shortName>
    </alternativeName>
</protein>
<evidence type="ECO:0000255" key="1">
    <source>
        <dbReference type="HAMAP-Rule" id="MF_00316"/>
    </source>
</evidence>
<proteinExistence type="inferred from homology"/>
<dbReference type="EC" id="2.7.7.77" evidence="1"/>
<dbReference type="EMBL" id="BA000033">
    <property type="protein sequence ID" value="BAB96052.1"/>
    <property type="molecule type" value="Genomic_DNA"/>
</dbReference>
<dbReference type="RefSeq" id="WP_000643988.1">
    <property type="nucleotide sequence ID" value="NC_003923.1"/>
</dbReference>
<dbReference type="SMR" id="Q8NVA4"/>
<dbReference type="KEGG" id="sam:MW2187"/>
<dbReference type="HOGENOM" id="CLU_055597_2_0_9"/>
<dbReference type="GO" id="GO:0005737">
    <property type="term" value="C:cytoplasm"/>
    <property type="evidence" value="ECO:0007669"/>
    <property type="project" value="UniProtKB-SubCell"/>
</dbReference>
<dbReference type="GO" id="GO:0005525">
    <property type="term" value="F:GTP binding"/>
    <property type="evidence" value="ECO:0007669"/>
    <property type="project" value="UniProtKB-UniRule"/>
</dbReference>
<dbReference type="GO" id="GO:0046872">
    <property type="term" value="F:metal ion binding"/>
    <property type="evidence" value="ECO:0007669"/>
    <property type="project" value="UniProtKB-KW"/>
</dbReference>
<dbReference type="GO" id="GO:0061603">
    <property type="term" value="F:molybdenum cofactor guanylyltransferase activity"/>
    <property type="evidence" value="ECO:0007669"/>
    <property type="project" value="UniProtKB-EC"/>
</dbReference>
<dbReference type="GO" id="GO:0006777">
    <property type="term" value="P:Mo-molybdopterin cofactor biosynthetic process"/>
    <property type="evidence" value="ECO:0007669"/>
    <property type="project" value="UniProtKB-KW"/>
</dbReference>
<dbReference type="CDD" id="cd02503">
    <property type="entry name" value="MobA"/>
    <property type="match status" value="1"/>
</dbReference>
<dbReference type="Gene3D" id="3.90.550.10">
    <property type="entry name" value="Spore Coat Polysaccharide Biosynthesis Protein SpsA, Chain A"/>
    <property type="match status" value="1"/>
</dbReference>
<dbReference type="HAMAP" id="MF_00316">
    <property type="entry name" value="MobA"/>
    <property type="match status" value="1"/>
</dbReference>
<dbReference type="InterPro" id="IPR025877">
    <property type="entry name" value="MobA-like_NTP_Trfase"/>
</dbReference>
<dbReference type="InterPro" id="IPR013482">
    <property type="entry name" value="Molybde_CF_guanTrfase"/>
</dbReference>
<dbReference type="InterPro" id="IPR029044">
    <property type="entry name" value="Nucleotide-diphossugar_trans"/>
</dbReference>
<dbReference type="NCBIfam" id="NF001457">
    <property type="entry name" value="PRK00317.1-3"/>
    <property type="match status" value="1"/>
</dbReference>
<dbReference type="PANTHER" id="PTHR19136">
    <property type="entry name" value="MOLYBDENUM COFACTOR GUANYLYLTRANSFERASE"/>
    <property type="match status" value="1"/>
</dbReference>
<dbReference type="PANTHER" id="PTHR19136:SF81">
    <property type="entry name" value="MOLYBDENUM COFACTOR GUANYLYLTRANSFERASE"/>
    <property type="match status" value="1"/>
</dbReference>
<dbReference type="Pfam" id="PF12804">
    <property type="entry name" value="NTP_transf_3"/>
    <property type="match status" value="1"/>
</dbReference>
<dbReference type="SUPFAM" id="SSF53448">
    <property type="entry name" value="Nucleotide-diphospho-sugar transferases"/>
    <property type="match status" value="1"/>
</dbReference>
<accession>Q8NVA4</accession>
<reference key="1">
    <citation type="journal article" date="2002" name="Lancet">
        <title>Genome and virulence determinants of high virulence community-acquired MRSA.</title>
        <authorList>
            <person name="Baba T."/>
            <person name="Takeuchi F."/>
            <person name="Kuroda M."/>
            <person name="Yuzawa H."/>
            <person name="Aoki K."/>
            <person name="Oguchi A."/>
            <person name="Nagai Y."/>
            <person name="Iwama N."/>
            <person name="Asano K."/>
            <person name="Naimi T."/>
            <person name="Kuroda H."/>
            <person name="Cui L."/>
            <person name="Yamamoto K."/>
            <person name="Hiramatsu K."/>
        </authorList>
    </citation>
    <scope>NUCLEOTIDE SEQUENCE [LARGE SCALE GENOMIC DNA]</scope>
    <source>
        <strain>MW2</strain>
    </source>
</reference>
<name>MOBA_STAAW</name>
<organism>
    <name type="scientific">Staphylococcus aureus (strain MW2)</name>
    <dbReference type="NCBI Taxonomy" id="196620"/>
    <lineage>
        <taxon>Bacteria</taxon>
        <taxon>Bacillati</taxon>
        <taxon>Bacillota</taxon>
        <taxon>Bacilli</taxon>
        <taxon>Bacillales</taxon>
        <taxon>Staphylococcaceae</taxon>
        <taxon>Staphylococcus</taxon>
    </lineage>
</organism>
<sequence length="199" mass="22542">MKAIILAGGHSVRFGKPKAFAEVNGETFYSRVIKTLESTNMFNEIIISTNAQLATQFKYPNVVIDDENHNDKGPLAGIYTIMKQHPEEELFFVVSVDTPMITGKAVSTLYQFLVSHLIENHLDVAAFKEDGRFIPTIAFYSPNALGAITKALHSDNYSFKNVYHELSTDYLDVRDVDAPSYWYKNINYQHDLDALIQKL</sequence>
<comment type="function">
    <text evidence="1">Transfers a GMP moiety from GTP to Mo-molybdopterin (Mo-MPT) cofactor (Moco or molybdenum cofactor) to form Mo-molybdopterin guanine dinucleotide (Mo-MGD) cofactor.</text>
</comment>
<comment type="catalytic activity">
    <reaction evidence="1">
        <text>Mo-molybdopterin + GTP + H(+) = Mo-molybdopterin guanine dinucleotide + diphosphate</text>
        <dbReference type="Rhea" id="RHEA:34243"/>
        <dbReference type="ChEBI" id="CHEBI:15378"/>
        <dbReference type="ChEBI" id="CHEBI:33019"/>
        <dbReference type="ChEBI" id="CHEBI:37565"/>
        <dbReference type="ChEBI" id="CHEBI:71302"/>
        <dbReference type="ChEBI" id="CHEBI:71310"/>
        <dbReference type="EC" id="2.7.7.77"/>
    </reaction>
</comment>
<comment type="cofactor">
    <cofactor evidence="1">
        <name>Mg(2+)</name>
        <dbReference type="ChEBI" id="CHEBI:18420"/>
    </cofactor>
</comment>
<comment type="subcellular location">
    <subcellularLocation>
        <location evidence="1">Cytoplasm</location>
    </subcellularLocation>
</comment>
<comment type="domain">
    <text evidence="1">The N-terminal domain determines nucleotide recognition and specific binding, while the C-terminal domain determines the specific binding to the target protein.</text>
</comment>
<comment type="similarity">
    <text evidence="1">Belongs to the MobA family.</text>
</comment>
<gene>
    <name evidence="1" type="primary">mobA</name>
    <name type="ordered locus">MW2187</name>
</gene>
<feature type="chain" id="PRO_0000134916" description="Probable molybdenum cofactor guanylyltransferase">
    <location>
        <begin position="1"/>
        <end position="199"/>
    </location>
</feature>
<feature type="binding site" evidence="1">
    <location>
        <begin position="6"/>
        <end position="8"/>
    </location>
    <ligand>
        <name>GTP</name>
        <dbReference type="ChEBI" id="CHEBI:37565"/>
    </ligand>
</feature>
<feature type="binding site" evidence="1">
    <location>
        <position position="18"/>
    </location>
    <ligand>
        <name>GTP</name>
        <dbReference type="ChEBI" id="CHEBI:37565"/>
    </ligand>
</feature>
<feature type="binding site" evidence="1">
    <location>
        <position position="65"/>
    </location>
    <ligand>
        <name>GTP</name>
        <dbReference type="ChEBI" id="CHEBI:37565"/>
    </ligand>
</feature>
<feature type="binding site" evidence="1">
    <location>
        <position position="97"/>
    </location>
    <ligand>
        <name>GTP</name>
        <dbReference type="ChEBI" id="CHEBI:37565"/>
    </ligand>
</feature>
<feature type="binding site" evidence="1">
    <location>
        <position position="97"/>
    </location>
    <ligand>
        <name>Mg(2+)</name>
        <dbReference type="ChEBI" id="CHEBI:18420"/>
    </ligand>
</feature>